<feature type="chain" id="PRO_1000128825" description="Large ribosomal subunit protein bL27">
    <location>
        <begin position="1"/>
        <end position="85"/>
    </location>
</feature>
<feature type="region of interest" description="Disordered" evidence="2">
    <location>
        <begin position="1"/>
        <end position="22"/>
    </location>
</feature>
<protein>
    <recommendedName>
        <fullName evidence="1">Large ribosomal subunit protein bL27</fullName>
    </recommendedName>
    <alternativeName>
        <fullName evidence="3">50S ribosomal protein L27</fullName>
    </alternativeName>
</protein>
<comment type="similarity">
    <text evidence="1">Belongs to the bacterial ribosomal protein bL27 family.</text>
</comment>
<proteinExistence type="inferred from homology"/>
<organism>
    <name type="scientific">Aliivibrio fischeri (strain MJ11)</name>
    <name type="common">Vibrio fischeri</name>
    <dbReference type="NCBI Taxonomy" id="388396"/>
    <lineage>
        <taxon>Bacteria</taxon>
        <taxon>Pseudomonadati</taxon>
        <taxon>Pseudomonadota</taxon>
        <taxon>Gammaproteobacteria</taxon>
        <taxon>Vibrionales</taxon>
        <taxon>Vibrionaceae</taxon>
        <taxon>Aliivibrio</taxon>
    </lineage>
</organism>
<reference key="1">
    <citation type="submission" date="2008-08" db="EMBL/GenBank/DDBJ databases">
        <title>Complete sequence of Vibrio fischeri strain MJ11.</title>
        <authorList>
            <person name="Mandel M.J."/>
            <person name="Stabb E.V."/>
            <person name="Ruby E.G."/>
            <person name="Ferriera S."/>
            <person name="Johnson J."/>
            <person name="Kravitz S."/>
            <person name="Beeson K."/>
            <person name="Sutton G."/>
            <person name="Rogers Y.-H."/>
            <person name="Friedman R."/>
            <person name="Frazier M."/>
            <person name="Venter J.C."/>
        </authorList>
    </citation>
    <scope>NUCLEOTIDE SEQUENCE [LARGE SCALE GENOMIC DNA]</scope>
    <source>
        <strain>MJ11</strain>
    </source>
</reference>
<name>RL27_ALIFM</name>
<evidence type="ECO:0000255" key="1">
    <source>
        <dbReference type="HAMAP-Rule" id="MF_00539"/>
    </source>
</evidence>
<evidence type="ECO:0000256" key="2">
    <source>
        <dbReference type="SAM" id="MobiDB-lite"/>
    </source>
</evidence>
<evidence type="ECO:0000305" key="3"/>
<keyword id="KW-0687">Ribonucleoprotein</keyword>
<keyword id="KW-0689">Ribosomal protein</keyword>
<accession>B5FGF8</accession>
<sequence>MAHKKAGGSTRNGRDSESKRLGVKRFGGESVLAGNIIVRQRGTKFHAGTNVGIGKDHTLFALSEGKVKFEVKGPKNRKFVSIEAE</sequence>
<dbReference type="EMBL" id="CP001139">
    <property type="protein sequence ID" value="ACH64951.1"/>
    <property type="molecule type" value="Genomic_DNA"/>
</dbReference>
<dbReference type="RefSeq" id="WP_005417307.1">
    <property type="nucleotide sequence ID" value="NC_011184.1"/>
</dbReference>
<dbReference type="SMR" id="B5FGF8"/>
<dbReference type="GeneID" id="56276413"/>
<dbReference type="KEGG" id="vfm:VFMJ11_0267"/>
<dbReference type="HOGENOM" id="CLU_095424_4_1_6"/>
<dbReference type="Proteomes" id="UP000001857">
    <property type="component" value="Chromosome I"/>
</dbReference>
<dbReference type="GO" id="GO:0022625">
    <property type="term" value="C:cytosolic large ribosomal subunit"/>
    <property type="evidence" value="ECO:0007669"/>
    <property type="project" value="TreeGrafter"/>
</dbReference>
<dbReference type="GO" id="GO:0003735">
    <property type="term" value="F:structural constituent of ribosome"/>
    <property type="evidence" value="ECO:0007669"/>
    <property type="project" value="InterPro"/>
</dbReference>
<dbReference type="GO" id="GO:0006412">
    <property type="term" value="P:translation"/>
    <property type="evidence" value="ECO:0007669"/>
    <property type="project" value="UniProtKB-UniRule"/>
</dbReference>
<dbReference type="FunFam" id="2.40.50.100:FF:000001">
    <property type="entry name" value="50S ribosomal protein L27"/>
    <property type="match status" value="1"/>
</dbReference>
<dbReference type="Gene3D" id="2.40.50.100">
    <property type="match status" value="1"/>
</dbReference>
<dbReference type="HAMAP" id="MF_00539">
    <property type="entry name" value="Ribosomal_bL27"/>
    <property type="match status" value="1"/>
</dbReference>
<dbReference type="InterPro" id="IPR001684">
    <property type="entry name" value="Ribosomal_bL27"/>
</dbReference>
<dbReference type="InterPro" id="IPR018261">
    <property type="entry name" value="Ribosomal_bL27_CS"/>
</dbReference>
<dbReference type="NCBIfam" id="TIGR00062">
    <property type="entry name" value="L27"/>
    <property type="match status" value="1"/>
</dbReference>
<dbReference type="PANTHER" id="PTHR15893:SF0">
    <property type="entry name" value="LARGE RIBOSOMAL SUBUNIT PROTEIN BL27M"/>
    <property type="match status" value="1"/>
</dbReference>
<dbReference type="PANTHER" id="PTHR15893">
    <property type="entry name" value="RIBOSOMAL PROTEIN L27"/>
    <property type="match status" value="1"/>
</dbReference>
<dbReference type="Pfam" id="PF01016">
    <property type="entry name" value="Ribosomal_L27"/>
    <property type="match status" value="1"/>
</dbReference>
<dbReference type="PRINTS" id="PR00063">
    <property type="entry name" value="RIBOSOMALL27"/>
</dbReference>
<dbReference type="SUPFAM" id="SSF110324">
    <property type="entry name" value="Ribosomal L27 protein-like"/>
    <property type="match status" value="1"/>
</dbReference>
<dbReference type="PROSITE" id="PS00831">
    <property type="entry name" value="RIBOSOMAL_L27"/>
    <property type="match status" value="1"/>
</dbReference>
<gene>
    <name evidence="1" type="primary">rpmA</name>
    <name type="ordered locus">VFMJ11_0267</name>
</gene>